<sequence>MLNLFDNFDQASFDFLRSQRTAQIKIPTVVINDDGFLPPEVESPIKYWGNYNVNKKPLYFDHLSLPRYWRILSTAAQGHIYDLDKKRADIIYQATDNTRQVKEVRWLNNNGKVSWIDHYNRYGYRFAQTYYRNEQPAWRKYYDKKNRVFLEWNLIAGDFFLDVDGGYHFPSLIELVKYYLQTRHFKLDHIFYNTLNQGLSVSLNLPADGSDTLFWHEPLSGDELPGNMKFLMENSTRTKHIIFQRYTDWQRIGANLKNNHVDFGFLGTIYPHPRANQLRPQALILTNSDEIVELSTLIKNLPNIKFHIAAVTEMSGKLLAYQQYENVELYPNVSSARVKQLIADCDIYLDINRQNEILDAVRGAFEQNMLIVGFDETLHEPQFVTPQNMFKVNEAQKMSKHIMAALLKPALMKELIDTQRQLASEVSVQDYQRMIGALQSE</sequence>
<protein>
    <recommendedName>
        <fullName evidence="1">UDP-N-acetylglucosamine--peptide N-acetylglucosaminyltransferase stabilizing protein GtfB</fullName>
    </recommendedName>
    <alternativeName>
        <fullName evidence="1">Glycosyltransferase stabilizing protein GtfB</fullName>
    </alternativeName>
</protein>
<keyword id="KW-1003">Cell membrane</keyword>
<keyword id="KW-0472">Membrane</keyword>
<reference key="1">
    <citation type="journal article" date="2011" name="J. Bacteriol.">
        <title>Genome sequence of the vertebrate gut symbiont Lactobacillus reuteri ATCC 53608.</title>
        <authorList>
            <person name="Heavens D."/>
            <person name="Tailford L.E."/>
            <person name="Crossman L."/>
            <person name="Jeffers F."/>
            <person name="Mackenzie D.A."/>
            <person name="Caccamo M."/>
            <person name="Juge N."/>
        </authorList>
    </citation>
    <scope>NUCLEOTIDE SEQUENCE [LARGE SCALE GENOMIC DNA]</scope>
    <source>
        <strain>ATCC 53608 / LMG 31752 / 1063</strain>
    </source>
</reference>
<reference key="2">
    <citation type="journal article" date="2019" name="Glycobiology">
        <title>Serine-rich repeat protein adhesins from Lactobacillus reuteri display strain specific glycosylation profiles.</title>
        <authorList>
            <person name="Latousakis D."/>
            <person name="Nepravishta R."/>
            <person name="Rejzek M."/>
            <person name="Wegmann U."/>
            <person name="Le Gall G."/>
            <person name="Kavanaugh D."/>
            <person name="Colquhoun I.J."/>
            <person name="Frese S."/>
            <person name="MacKenzie D.A."/>
            <person name="Walter J."/>
            <person name="Angulo J."/>
            <person name="Field R.A."/>
            <person name="Juge N."/>
        </authorList>
    </citation>
    <scope>FUNCTION</scope>
    <scope>PATHWAY</scope>
    <source>
        <strain>ATCC 53608 / LMG 31752 / 1063</strain>
    </source>
</reference>
<comment type="function">
    <text evidence="1">Required for polymorphic O-glycosylation of the serine-rich repeat protein (SRRP) in this bacteria. A stabilizing protein that is part of the accessory SecA2/SecY2 system specifically required to export serine-rich repeat cell wall proteins encoded in the same operon. The GtfA-GtfB complex adds GlcNAc from UDP-GlcNAc to the substrate protein, attaching the first sugar residue. Stabilizes the glycosylation activity of GtfA. Has no N-acetylglucosaminyl transferase activity on its own.</text>
</comment>
<comment type="pathway">
    <text evidence="1 2">Protein modification; protein glycosylation.</text>
</comment>
<comment type="subunit">
    <text evidence="1">Forms a heterotetramer with 2 subunits each of GtfA and GtfB. Part of the accessory SecA2/SecY2 protein translocation apparatus.</text>
</comment>
<comment type="subcellular location">
    <subcellularLocation>
        <location evidence="1">Cell membrane</location>
        <topology evidence="1">Peripheral membrane protein</topology>
    </subcellularLocation>
</comment>
<comment type="similarity">
    <text evidence="1">Belongs to the GtfB family.</text>
</comment>
<gene>
    <name evidence="1 3" type="primary">gtfB</name>
    <name type="ORF">LRATCC53608_1097</name>
</gene>
<evidence type="ECO:0000255" key="1">
    <source>
        <dbReference type="HAMAP-Rule" id="MF_01473"/>
    </source>
</evidence>
<evidence type="ECO:0000269" key="2">
    <source>
    </source>
</evidence>
<evidence type="ECO:0000303" key="3">
    <source>
    </source>
</evidence>
<feature type="chain" id="PRO_0000447249" description="UDP-N-acetylglucosamine--peptide N-acetylglucosaminyltransferase stabilizing protein GtfB">
    <location>
        <begin position="1"/>
        <end position="441"/>
    </location>
</feature>
<accession>A0A0S4NND9</accession>
<accession>F8KEI4</accession>
<organism>
    <name type="scientific">Limosilactobacillus reuteri subsp. suis (strain ATCC 53608 / LMG 31752 / 1063)</name>
    <name type="common">Lactobacillus reuteri</name>
    <dbReference type="NCBI Taxonomy" id="927703"/>
    <lineage>
        <taxon>Bacteria</taxon>
        <taxon>Bacillati</taxon>
        <taxon>Bacillota</taxon>
        <taxon>Bacilli</taxon>
        <taxon>Lactobacillales</taxon>
        <taxon>Lactobacillaceae</taxon>
        <taxon>Limosilactobacillus</taxon>
    </lineage>
</organism>
<proteinExistence type="inferred from homology"/>
<dbReference type="EMBL" id="FR854365">
    <property type="protein sequence ID" value="CCC03849.1"/>
    <property type="molecule type" value="Genomic_DNA"/>
</dbReference>
<dbReference type="SMR" id="A0A0S4NND9"/>
<dbReference type="HOGENOM" id="CLU_050378_0_0_9"/>
<dbReference type="UniPathway" id="UPA00378"/>
<dbReference type="GO" id="GO:0005886">
    <property type="term" value="C:plasma membrane"/>
    <property type="evidence" value="ECO:0007669"/>
    <property type="project" value="UniProtKB-SubCell"/>
</dbReference>
<dbReference type="GO" id="GO:0017122">
    <property type="term" value="C:protein N-acetylglucosaminyltransferase complex"/>
    <property type="evidence" value="ECO:0007669"/>
    <property type="project" value="UniProtKB-UniRule"/>
</dbReference>
<dbReference type="GO" id="GO:0018242">
    <property type="term" value="P:protein O-linked glycosylation via serine"/>
    <property type="evidence" value="ECO:0007669"/>
    <property type="project" value="UniProtKB-UniRule"/>
</dbReference>
<dbReference type="GO" id="GO:0031647">
    <property type="term" value="P:regulation of protein stability"/>
    <property type="evidence" value="ECO:0007669"/>
    <property type="project" value="UniProtKB-UniRule"/>
</dbReference>
<dbReference type="HAMAP" id="MF_01473">
    <property type="entry name" value="GtfB"/>
    <property type="match status" value="1"/>
</dbReference>
<dbReference type="InterPro" id="IPR014268">
    <property type="entry name" value="GtfB"/>
</dbReference>
<dbReference type="NCBIfam" id="TIGR02919">
    <property type="entry name" value="accessory Sec system glycosylation chaperone GtfB"/>
    <property type="match status" value="1"/>
</dbReference>
<name>GTFB_LIMR5</name>